<reference key="1">
    <citation type="submission" date="2007-03" db="EMBL/GenBank/DDBJ databases">
        <title>Sequencing analysis of Barbarea verna chloroplast DNA.</title>
        <authorList>
            <person name="Hosouchi T."/>
            <person name="Tsuruoka H."/>
            <person name="Kotani H."/>
        </authorList>
    </citation>
    <scope>NUCLEOTIDE SEQUENCE [LARGE SCALE GENOMIC DNA]</scope>
</reference>
<organism>
    <name type="scientific">Barbarea verna</name>
    <name type="common">Land cress</name>
    <name type="synonym">Erysimum vernum</name>
    <dbReference type="NCBI Taxonomy" id="50458"/>
    <lineage>
        <taxon>Eukaryota</taxon>
        <taxon>Viridiplantae</taxon>
        <taxon>Streptophyta</taxon>
        <taxon>Embryophyta</taxon>
        <taxon>Tracheophyta</taxon>
        <taxon>Spermatophyta</taxon>
        <taxon>Magnoliopsida</taxon>
        <taxon>eudicotyledons</taxon>
        <taxon>Gunneridae</taxon>
        <taxon>Pentapetalae</taxon>
        <taxon>rosids</taxon>
        <taxon>malvids</taxon>
        <taxon>Brassicales</taxon>
        <taxon>Brassicaceae</taxon>
        <taxon>Cardamineae</taxon>
        <taxon>Barbarea</taxon>
    </lineage>
</organism>
<evidence type="ECO:0000305" key="1"/>
<comment type="subcellular location">
    <subcellularLocation>
        <location>Plastid</location>
        <location>Chloroplast</location>
    </subcellularLocation>
</comment>
<comment type="similarity">
    <text evidence="1">Belongs to the universal ribosomal protein uS2 family.</text>
</comment>
<accession>A4QK94</accession>
<keyword id="KW-0150">Chloroplast</keyword>
<keyword id="KW-0934">Plastid</keyword>
<keyword id="KW-0687">Ribonucleoprotein</keyword>
<keyword id="KW-0689">Ribosomal protein</keyword>
<feature type="chain" id="PRO_0000352094" description="Small ribosomal subunit protein uS2c">
    <location>
        <begin position="1"/>
        <end position="236"/>
    </location>
</feature>
<geneLocation type="chloroplast"/>
<proteinExistence type="inferred from homology"/>
<dbReference type="EMBL" id="AP009370">
    <property type="protein sequence ID" value="BAF50099.1"/>
    <property type="molecule type" value="Genomic_DNA"/>
</dbReference>
<dbReference type="RefSeq" id="YP_001123275.1">
    <property type="nucleotide sequence ID" value="NC_009269.1"/>
</dbReference>
<dbReference type="SMR" id="A4QK94"/>
<dbReference type="GeneID" id="4961919"/>
<dbReference type="GO" id="GO:0009507">
    <property type="term" value="C:chloroplast"/>
    <property type="evidence" value="ECO:0007669"/>
    <property type="project" value="UniProtKB-SubCell"/>
</dbReference>
<dbReference type="GO" id="GO:0005763">
    <property type="term" value="C:mitochondrial small ribosomal subunit"/>
    <property type="evidence" value="ECO:0007669"/>
    <property type="project" value="TreeGrafter"/>
</dbReference>
<dbReference type="GO" id="GO:0003735">
    <property type="term" value="F:structural constituent of ribosome"/>
    <property type="evidence" value="ECO:0007669"/>
    <property type="project" value="InterPro"/>
</dbReference>
<dbReference type="GO" id="GO:0006412">
    <property type="term" value="P:translation"/>
    <property type="evidence" value="ECO:0007669"/>
    <property type="project" value="UniProtKB-UniRule"/>
</dbReference>
<dbReference type="CDD" id="cd01425">
    <property type="entry name" value="RPS2"/>
    <property type="match status" value="1"/>
</dbReference>
<dbReference type="FunFam" id="3.40.50.10490:FF:000101">
    <property type="match status" value="1"/>
</dbReference>
<dbReference type="FunFam" id="1.10.287.610:FF:000001">
    <property type="entry name" value="30S ribosomal protein S2"/>
    <property type="match status" value="1"/>
</dbReference>
<dbReference type="Gene3D" id="3.40.50.10490">
    <property type="entry name" value="Glucose-6-phosphate isomerase like protein, domain 1"/>
    <property type="match status" value="1"/>
</dbReference>
<dbReference type="Gene3D" id="1.10.287.610">
    <property type="entry name" value="Helix hairpin bin"/>
    <property type="match status" value="1"/>
</dbReference>
<dbReference type="HAMAP" id="MF_00291_B">
    <property type="entry name" value="Ribosomal_uS2_B"/>
    <property type="match status" value="1"/>
</dbReference>
<dbReference type="InterPro" id="IPR001865">
    <property type="entry name" value="Ribosomal_uS2"/>
</dbReference>
<dbReference type="InterPro" id="IPR005706">
    <property type="entry name" value="Ribosomal_uS2_bac/mit/plastid"/>
</dbReference>
<dbReference type="InterPro" id="IPR018130">
    <property type="entry name" value="Ribosomal_uS2_CS"/>
</dbReference>
<dbReference type="InterPro" id="IPR023591">
    <property type="entry name" value="Ribosomal_uS2_flav_dom_sf"/>
</dbReference>
<dbReference type="NCBIfam" id="TIGR01011">
    <property type="entry name" value="rpsB_bact"/>
    <property type="match status" value="1"/>
</dbReference>
<dbReference type="PANTHER" id="PTHR12534">
    <property type="entry name" value="30S RIBOSOMAL PROTEIN S2 PROKARYOTIC AND ORGANELLAR"/>
    <property type="match status" value="1"/>
</dbReference>
<dbReference type="PANTHER" id="PTHR12534:SF0">
    <property type="entry name" value="SMALL RIBOSOMAL SUBUNIT PROTEIN US2M"/>
    <property type="match status" value="1"/>
</dbReference>
<dbReference type="Pfam" id="PF00318">
    <property type="entry name" value="Ribosomal_S2"/>
    <property type="match status" value="1"/>
</dbReference>
<dbReference type="PRINTS" id="PR00395">
    <property type="entry name" value="RIBOSOMALS2"/>
</dbReference>
<dbReference type="SUPFAM" id="SSF52313">
    <property type="entry name" value="Ribosomal protein S2"/>
    <property type="match status" value="1"/>
</dbReference>
<dbReference type="PROSITE" id="PS00962">
    <property type="entry name" value="RIBOSOMAL_S2_1"/>
    <property type="match status" value="1"/>
</dbReference>
<dbReference type="PROSITE" id="PS00963">
    <property type="entry name" value="RIBOSOMAL_S2_2"/>
    <property type="match status" value="1"/>
</dbReference>
<protein>
    <recommendedName>
        <fullName evidence="1">Small ribosomal subunit protein uS2c</fullName>
    </recommendedName>
    <alternativeName>
        <fullName>30S ribosomal protein S2, chloroplastic</fullName>
    </alternativeName>
</protein>
<sequence>MTKRYWNIDLEEMMRAGVHFGHGTRKWNPRMAPYISAKRKGIHIINLTRTARFLSEACDLVFDAASKGKQFLIVGTKNKAADLVSRAAIRARCHYVNKKWLGGMLTNWSTTEKRLHKFRDLRTEQKTEGFNRLPKRDAAVLKRQLSRLKTYLGGIKYMTGLPDIVIIIDQQEEYTALRECITLGIPTISLIDTNCNPDLADISIPANDDAIASIRFTLNKLVFAICEGRSSYIQNS</sequence>
<gene>
    <name type="primary">rps2</name>
</gene>
<name>RR2_BARVE</name>